<accession>P0A6Q3</accession>
<accession>P18391</accession>
<accession>Q59383</accession>
<name>FABA_ECOLI</name>
<proteinExistence type="evidence at protein level"/>
<reference key="1">
    <citation type="journal article" date="1988" name="J. Biol. Chem.">
        <title>Derived amino acid sequence and identification of active site residues of Escherichia coli beta-hydroxydecanoyl thioester dehydrase.</title>
        <authorList>
            <person name="Cronan J.E. Jr."/>
            <person name="Li W.-B."/>
            <person name="Coleman R."/>
            <person name="Narasimhan M."/>
            <person name="de Mendoza D."/>
            <person name="Schwab J.M."/>
        </authorList>
    </citation>
    <scope>NUCLEOTIDE SEQUENCE [GENOMIC DNA]</scope>
    <scope>PARTIAL PROTEIN SEQUENCE</scope>
    <source>
        <strain>K12</strain>
    </source>
</reference>
<reference key="2">
    <citation type="journal article" date="1992" name="Cell">
        <title>A new mechanism of transcriptional regulation: release of an activator triggered by small molecule binding.</title>
        <authorList>
            <person name="Henry M.F."/>
            <person name="Cronan J.E. Jr."/>
        </authorList>
    </citation>
    <scope>SEQUENCE REVISION TO 170-172</scope>
</reference>
<reference key="3">
    <citation type="journal article" date="1996" name="DNA Res.">
        <title>A 718-kb DNA sequence of the Escherichia coli K-12 genome corresponding to the 12.7-28.0 min region on the linkage map.</title>
        <authorList>
            <person name="Oshima T."/>
            <person name="Aiba H."/>
            <person name="Baba T."/>
            <person name="Fujita K."/>
            <person name="Hayashi K."/>
            <person name="Honjo A."/>
            <person name="Ikemoto K."/>
            <person name="Inada T."/>
            <person name="Itoh T."/>
            <person name="Kajihara M."/>
            <person name="Kanai K."/>
            <person name="Kashimoto K."/>
            <person name="Kimura S."/>
            <person name="Kitagawa M."/>
            <person name="Makino K."/>
            <person name="Masuda S."/>
            <person name="Miki T."/>
            <person name="Mizobuchi K."/>
            <person name="Mori H."/>
            <person name="Motomura K."/>
            <person name="Nakamura Y."/>
            <person name="Nashimoto H."/>
            <person name="Nishio Y."/>
            <person name="Saito N."/>
            <person name="Sampei G."/>
            <person name="Seki Y."/>
            <person name="Tagami H."/>
            <person name="Takemoto K."/>
            <person name="Wada C."/>
            <person name="Yamamoto Y."/>
            <person name="Yano M."/>
            <person name="Horiuchi T."/>
        </authorList>
    </citation>
    <scope>NUCLEOTIDE SEQUENCE [LARGE SCALE GENOMIC DNA]</scope>
    <source>
        <strain>K12 / W3110 / ATCC 27325 / DSM 5911</strain>
    </source>
</reference>
<reference key="4">
    <citation type="journal article" date="1997" name="Science">
        <title>The complete genome sequence of Escherichia coli K-12.</title>
        <authorList>
            <person name="Blattner F.R."/>
            <person name="Plunkett G. III"/>
            <person name="Bloch C.A."/>
            <person name="Perna N.T."/>
            <person name="Burland V."/>
            <person name="Riley M."/>
            <person name="Collado-Vides J."/>
            <person name="Glasner J.D."/>
            <person name="Rode C.K."/>
            <person name="Mayhew G.F."/>
            <person name="Gregor J."/>
            <person name="Davis N.W."/>
            <person name="Kirkpatrick H.A."/>
            <person name="Goeden M.A."/>
            <person name="Rose D.J."/>
            <person name="Mau B."/>
            <person name="Shao Y."/>
        </authorList>
    </citation>
    <scope>NUCLEOTIDE SEQUENCE [LARGE SCALE GENOMIC DNA]</scope>
    <source>
        <strain>K12 / MG1655 / ATCC 47076</strain>
    </source>
</reference>
<reference key="5">
    <citation type="journal article" date="2006" name="Mol. Syst. Biol.">
        <title>Highly accurate genome sequences of Escherichia coli K-12 strains MG1655 and W3110.</title>
        <authorList>
            <person name="Hayashi K."/>
            <person name="Morooka N."/>
            <person name="Yamamoto Y."/>
            <person name="Fujita K."/>
            <person name="Isono K."/>
            <person name="Choi S."/>
            <person name="Ohtsubo E."/>
            <person name="Baba T."/>
            <person name="Wanner B.L."/>
            <person name="Mori H."/>
            <person name="Horiuchi T."/>
        </authorList>
    </citation>
    <scope>NUCLEOTIDE SEQUENCE [LARGE SCALE GENOMIC DNA]</scope>
    <source>
        <strain>K12 / W3110 / ATCC 27325 / DSM 5911</strain>
    </source>
</reference>
<reference key="6">
    <citation type="journal article" date="1995" name="J. Biol. Chem.">
        <title>Enoyl-acyl carrier protein reductase (fabI) plays a determinant role in completing cycles of fatty acid elongation in Escherichia coli.</title>
        <authorList>
            <person name="Heath R.J."/>
            <person name="Rock C.O."/>
        </authorList>
    </citation>
    <scope>FUNCTION</scope>
    <scope>CATALYTIC ACTIVITY</scope>
</reference>
<reference key="7">
    <citation type="journal article" date="1996" name="J. Bacteriol.">
        <title>Increased unsaturated fatty acid production associated with a suppressor of the fabA6(Ts) mutation in Escherichia coli.</title>
        <authorList>
            <person name="Rock C.O."/>
            <person name="Tsay J.-T."/>
            <person name="Heath R."/>
            <person name="Jackowski S."/>
        </authorList>
    </citation>
    <scope>MUTANTS FABA6 AND FABA2</scope>
    <source>
        <strain>K12</strain>
    </source>
</reference>
<reference key="8">
    <citation type="journal article" date="1996" name="J. Biol. Chem.">
        <title>Roles of the FabA and FabZ beta-hydroxyacyl-acyl carrier protein dehydratases in Escherichia coli fatty acid biosynthesis.</title>
        <authorList>
            <person name="Heath R.J."/>
            <person name="Rock C.O."/>
        </authorList>
    </citation>
    <scope>FUNCTION</scope>
    <scope>CATALYTIC ACTIVITY</scope>
    <scope>SUBSTRATE SPECIFICITY</scope>
</reference>
<reference key="9">
    <citation type="journal article" date="1997" name="Electrophoresis">
        <title>Escherichia coli proteome analysis using the gene-protein database.</title>
        <authorList>
            <person name="VanBogelen R.A."/>
            <person name="Abshire K.Z."/>
            <person name="Moldover B."/>
            <person name="Olson E.R."/>
            <person name="Neidhardt F.C."/>
        </authorList>
    </citation>
    <scope>IDENTIFICATION BY 2D-GEL</scope>
</reference>
<reference key="10">
    <citation type="journal article" date="2000" name="J. Bacteriol.">
        <title>Beta-ketoacyl-acyl carrier protein synthase III (FabH) is a determining factor in branched-chain fatty acid biosynthesis.</title>
        <authorList>
            <person name="Choi K.-H."/>
            <person name="Heath R.J."/>
            <person name="Rock C.O."/>
        </authorList>
    </citation>
    <scope>FUNCTION</scope>
    <scope>CATALYTIC ACTIVITY</scope>
</reference>
<reference key="11">
    <citation type="journal article" date="2002" name="J. Biol. Chem.">
        <title>The FabR (YijC) transcription factor regulates unsaturated fatty acid biosynthesis in Escherichia coli.</title>
        <authorList>
            <person name="Zhang Y.-M."/>
            <person name="Marrakchi H."/>
            <person name="Rock C.O."/>
        </authorList>
    </citation>
    <scope>INDUCTION</scope>
</reference>
<reference key="12">
    <citation type="journal article" date="2011" name="Mol. Microbiol.">
        <title>Complex binding of the FabR repressor of bacterial unsaturated fatty acid biosynthesis to its cognate promoters.</title>
        <authorList>
            <person name="Feng Y."/>
            <person name="Cronan J.E."/>
        </authorList>
    </citation>
    <scope>ACTIVITY REGULATION</scope>
    <scope>ACTIVE SITE</scope>
    <scope>INDUCTION</scope>
</reference>
<reference key="13">
    <citation type="journal article" date="1996" name="Structure">
        <title>Structure of a dehydratase-isomerase from the bacterial pathway for biosynthesis of unsaturated fatty acids: two catalytic activities in one active site.</title>
        <authorList>
            <person name="Leesong M."/>
            <person name="Henderson B.S."/>
            <person name="Gillig J.R."/>
            <person name="Schwab J.M."/>
            <person name="Smith J.L."/>
        </authorList>
    </citation>
    <scope>X-RAY CRYSTALLOGRAPHY (2.0 ANGSTROMS)</scope>
</reference>
<sequence length="172" mass="18969">MVDKRESYTKEDLLASGRGELFGAKGPQLPAPNMLMMDRVVKMTETGGNFDKGYVEAELDINPDLWFFGCHFIGDPVMPGCLGLDAMWQLVGFYLGWLGGEGKGRALGVGEVKFTGQVLPTAKKVTYRIHFKRIVNRRLIMGLADGEVLVDGRLIYTASDLKVGLFQDTSAF</sequence>
<comment type="function">
    <text evidence="1 4 5">Necessary for the introduction of cis unsaturation into fatty acids (PubMed:8910376). Catalyzes the dehydration of (3R)-3-hydroxydecanoyl-ACP to (2E)-decenoyl-ACP and then its isomerization to (3Z)-decenoyl-ACP (PubMed:8910376). Can catalyze the dehydratase reaction for beta-hydroxyacyl-ACPs with saturated chain lengths up to 16:0, being most active on intermediate chain length (PubMed:10629181, PubMed:7592873, PubMed:8910376). Is inactive in the dehydration of long chain unsaturated beta-hydroxyacyl-ACP (PubMed:8910376).</text>
</comment>
<comment type="catalytic activity">
    <reaction evidence="1 4 5">
        <text>a (3R)-hydroxyacyl-[ACP] = a (2E)-enoyl-[ACP] + H2O</text>
        <dbReference type="Rhea" id="RHEA:13097"/>
        <dbReference type="Rhea" id="RHEA-COMP:9925"/>
        <dbReference type="Rhea" id="RHEA-COMP:9945"/>
        <dbReference type="ChEBI" id="CHEBI:15377"/>
        <dbReference type="ChEBI" id="CHEBI:78784"/>
        <dbReference type="ChEBI" id="CHEBI:78827"/>
        <dbReference type="EC" id="4.2.1.59"/>
    </reaction>
</comment>
<comment type="catalytic activity">
    <reaction evidence="5">
        <text>(3R)-hydroxydecanoyl-[ACP] = (2E)-decenoyl-[ACP] + H2O</text>
        <dbReference type="Rhea" id="RHEA:41860"/>
        <dbReference type="Rhea" id="RHEA-COMP:9638"/>
        <dbReference type="Rhea" id="RHEA-COMP:9639"/>
        <dbReference type="ChEBI" id="CHEBI:15377"/>
        <dbReference type="ChEBI" id="CHEBI:78466"/>
        <dbReference type="ChEBI" id="CHEBI:78467"/>
    </reaction>
    <physiologicalReaction direction="left-to-right" evidence="5">
        <dbReference type="Rhea" id="RHEA:41861"/>
    </physiologicalReaction>
</comment>
<comment type="catalytic activity">
    <reaction evidence="5">
        <text>(2E)-decenoyl-[ACP] = (3Z)-decenoyl-[ACP]</text>
        <dbReference type="Rhea" id="RHEA:23568"/>
        <dbReference type="Rhea" id="RHEA-COMP:9639"/>
        <dbReference type="Rhea" id="RHEA-COMP:9927"/>
        <dbReference type="ChEBI" id="CHEBI:78467"/>
        <dbReference type="ChEBI" id="CHEBI:78798"/>
        <dbReference type="EC" id="5.3.3.14"/>
    </reaction>
    <physiologicalReaction direction="left-to-right" evidence="5">
        <dbReference type="Rhea" id="RHEA:23569"/>
    </physiologicalReaction>
</comment>
<comment type="catalytic activity">
    <reaction evidence="1 4 5">
        <text>(3R)-hydroxybutanoyl-[ACP] = (2E)-butenoyl-[ACP] + H2O</text>
        <dbReference type="Rhea" id="RHEA:41808"/>
        <dbReference type="Rhea" id="RHEA-COMP:9626"/>
        <dbReference type="Rhea" id="RHEA-COMP:9627"/>
        <dbReference type="ChEBI" id="CHEBI:15377"/>
        <dbReference type="ChEBI" id="CHEBI:78451"/>
        <dbReference type="ChEBI" id="CHEBI:78453"/>
    </reaction>
    <physiologicalReaction direction="left-to-right" evidence="1 4 5">
        <dbReference type="Rhea" id="RHEA:41809"/>
    </physiologicalReaction>
</comment>
<comment type="catalytic activity">
    <reaction evidence="5">
        <text>(3R)-hydroxyhexanoyl-[ACP] = (2E)-hexenoyl-[ACP] + H2O</text>
        <dbReference type="Rhea" id="RHEA:41828"/>
        <dbReference type="Rhea" id="RHEA-COMP:9630"/>
        <dbReference type="Rhea" id="RHEA-COMP:9631"/>
        <dbReference type="ChEBI" id="CHEBI:15377"/>
        <dbReference type="ChEBI" id="CHEBI:78457"/>
        <dbReference type="ChEBI" id="CHEBI:78458"/>
    </reaction>
    <physiologicalReaction direction="left-to-right" evidence="5">
        <dbReference type="Rhea" id="RHEA:41829"/>
    </physiologicalReaction>
</comment>
<comment type="catalytic activity">
    <reaction evidence="5">
        <text>(3R)-hydroxyoctanoyl-[ACP] = (2E)-octenoyl-[ACP] + H2O</text>
        <dbReference type="Rhea" id="RHEA:41844"/>
        <dbReference type="Rhea" id="RHEA-COMP:9634"/>
        <dbReference type="Rhea" id="RHEA-COMP:9635"/>
        <dbReference type="ChEBI" id="CHEBI:15377"/>
        <dbReference type="ChEBI" id="CHEBI:78461"/>
        <dbReference type="ChEBI" id="CHEBI:78462"/>
    </reaction>
    <physiologicalReaction direction="left-to-right" evidence="5">
        <dbReference type="Rhea" id="RHEA:41845"/>
    </physiologicalReaction>
</comment>
<comment type="catalytic activity">
    <reaction evidence="5">
        <text>(3R)-hydroxydodecanoyl-[ACP] = (2E)-dodecenoyl-[ACP] + H2O</text>
        <dbReference type="Rhea" id="RHEA:41876"/>
        <dbReference type="Rhea" id="RHEA-COMP:9642"/>
        <dbReference type="Rhea" id="RHEA-COMP:9643"/>
        <dbReference type="ChEBI" id="CHEBI:15377"/>
        <dbReference type="ChEBI" id="CHEBI:78470"/>
        <dbReference type="ChEBI" id="CHEBI:78472"/>
    </reaction>
    <physiologicalReaction direction="left-to-right" evidence="5">
        <dbReference type="Rhea" id="RHEA:41877"/>
    </physiologicalReaction>
</comment>
<comment type="catalytic activity">
    <reaction evidence="5">
        <text>(3R)-hydroxytetradecanoyl-[ACP] = (2E)-tetradecenoyl-[ACP] + H2O</text>
        <dbReference type="Rhea" id="RHEA:41892"/>
        <dbReference type="Rhea" id="RHEA-COMP:9646"/>
        <dbReference type="Rhea" id="RHEA-COMP:9647"/>
        <dbReference type="ChEBI" id="CHEBI:15377"/>
        <dbReference type="ChEBI" id="CHEBI:78474"/>
        <dbReference type="ChEBI" id="CHEBI:78475"/>
    </reaction>
    <physiologicalReaction direction="left-to-right" evidence="5">
        <dbReference type="Rhea" id="RHEA:41893"/>
    </physiologicalReaction>
</comment>
<comment type="catalytic activity">
    <reaction evidence="5">
        <text>(3R)-hydroxyhexadecanoyl-[ACP] = (2E)-hexadecenoyl-[ACP] + H2O</text>
        <dbReference type="Rhea" id="RHEA:41908"/>
        <dbReference type="Rhea" id="RHEA-COMP:9650"/>
        <dbReference type="Rhea" id="RHEA-COMP:9651"/>
        <dbReference type="ChEBI" id="CHEBI:15377"/>
        <dbReference type="ChEBI" id="CHEBI:78480"/>
        <dbReference type="ChEBI" id="CHEBI:78481"/>
    </reaction>
    <physiologicalReaction direction="left-to-right" evidence="5">
        <dbReference type="Rhea" id="RHEA:41909"/>
    </physiologicalReaction>
</comment>
<comment type="catalytic activity">
    <reaction evidence="1">
        <text>(3R)-hydroxy-5-methylhexanoyl-[ACP] = (2E)-5-methylhexenoyl-[ACP] + H2O</text>
        <dbReference type="Rhea" id="RHEA:55128"/>
        <dbReference type="Rhea" id="RHEA-COMP:14095"/>
        <dbReference type="Rhea" id="RHEA-COMP:14097"/>
        <dbReference type="ChEBI" id="CHEBI:15377"/>
        <dbReference type="ChEBI" id="CHEBI:78986"/>
        <dbReference type="ChEBI" id="CHEBI:138610"/>
    </reaction>
    <physiologicalReaction direction="left-to-right" evidence="1">
        <dbReference type="Rhea" id="RHEA:55129"/>
    </physiologicalReaction>
</comment>
<comment type="activity regulation">
    <text evidence="7">Irreversibly inactivated by 3-decynoyl-N-acetylcysteamine (DNAC) which binds to the active site and forms an adduct (PubMed:21276098).</text>
</comment>
<comment type="pathway">
    <text>Lipid metabolism; fatty acid biosynthesis.</text>
</comment>
<comment type="subunit">
    <text>Homodimer.</text>
</comment>
<comment type="subcellular location">
    <subcellularLocation>
        <location>Cytoplasm</location>
    </subcellularLocation>
</comment>
<comment type="induction">
    <text evidence="2 3">Mainly activated by FadR, but minor repression is also conferred by FabR (PubMed:11859088, PubMed:21276098).</text>
</comment>
<comment type="similarity">
    <text evidence="6">Belongs to the thioester dehydratase family. FabA subfamily.</text>
</comment>
<gene>
    <name type="primary">fabA</name>
    <name type="ordered locus">b0954</name>
    <name type="ordered locus">JW0937</name>
</gene>
<keyword id="KW-0002">3D-structure</keyword>
<keyword id="KW-0963">Cytoplasm</keyword>
<keyword id="KW-0903">Direct protein sequencing</keyword>
<keyword id="KW-0275">Fatty acid biosynthesis</keyword>
<keyword id="KW-0276">Fatty acid metabolism</keyword>
<keyword id="KW-0413">Isomerase</keyword>
<keyword id="KW-0444">Lipid biosynthesis</keyword>
<keyword id="KW-0443">Lipid metabolism</keyword>
<keyword id="KW-0456">Lyase</keyword>
<keyword id="KW-1185">Reference proteome</keyword>
<dbReference type="EC" id="4.2.1.59" evidence="1 4 5"/>
<dbReference type="EC" id="5.3.3.14" evidence="5"/>
<dbReference type="EMBL" id="J03186">
    <property type="protein sequence ID" value="AAA96496.1"/>
    <property type="molecule type" value="Genomic_DNA"/>
</dbReference>
<dbReference type="EMBL" id="U00096">
    <property type="protein sequence ID" value="AAC74040.1"/>
    <property type="molecule type" value="Genomic_DNA"/>
</dbReference>
<dbReference type="EMBL" id="AP009048">
    <property type="protein sequence ID" value="BAA35712.1"/>
    <property type="molecule type" value="Genomic_DNA"/>
</dbReference>
<dbReference type="EMBL" id="U37057">
    <property type="protein sequence ID" value="AAC44389.1"/>
    <property type="molecule type" value="Genomic_DNA"/>
</dbReference>
<dbReference type="EMBL" id="U56977">
    <property type="protein sequence ID" value="AAC44399.1"/>
    <property type="molecule type" value="Genomic_DNA"/>
</dbReference>
<dbReference type="PIR" id="A64836">
    <property type="entry name" value="DWECHD"/>
</dbReference>
<dbReference type="RefSeq" id="NP_415474.1">
    <property type="nucleotide sequence ID" value="NC_000913.3"/>
</dbReference>
<dbReference type="RefSeq" id="WP_000227927.1">
    <property type="nucleotide sequence ID" value="NZ_STEB01000006.1"/>
</dbReference>
<dbReference type="PDB" id="1MKA">
    <property type="method" value="X-ray"/>
    <property type="resolution" value="2.00 A"/>
    <property type="chains" value="A/B=2-172"/>
</dbReference>
<dbReference type="PDB" id="1MKB">
    <property type="method" value="X-ray"/>
    <property type="resolution" value="2.00 A"/>
    <property type="chains" value="A/B=2-172"/>
</dbReference>
<dbReference type="PDB" id="4KEH">
    <property type="method" value="X-ray"/>
    <property type="resolution" value="1.90 A"/>
    <property type="chains" value="A/B=2-172"/>
</dbReference>
<dbReference type="PDBsum" id="1MKA"/>
<dbReference type="PDBsum" id="1MKB"/>
<dbReference type="PDBsum" id="4KEH"/>
<dbReference type="SMR" id="P0A6Q3"/>
<dbReference type="BioGRID" id="4263239">
    <property type="interactions" value="222"/>
</dbReference>
<dbReference type="BioGRID" id="849942">
    <property type="interactions" value="1"/>
</dbReference>
<dbReference type="DIP" id="DIP-31864N"/>
<dbReference type="FunCoup" id="P0A6Q3">
    <property type="interactions" value="291"/>
</dbReference>
<dbReference type="IntAct" id="P0A6Q3">
    <property type="interactions" value="30"/>
</dbReference>
<dbReference type="STRING" id="511145.b0954"/>
<dbReference type="DrugBank" id="DB03813">
    <property type="generic name" value="2-Decenoyl N-acetyl cysteamine"/>
</dbReference>
<dbReference type="SwissLipids" id="SLP:000001782"/>
<dbReference type="jPOST" id="P0A6Q3"/>
<dbReference type="PaxDb" id="511145-b0954"/>
<dbReference type="EnsemblBacteria" id="AAC74040">
    <property type="protein sequence ID" value="AAC74040"/>
    <property type="gene ID" value="b0954"/>
</dbReference>
<dbReference type="GeneID" id="93776460"/>
<dbReference type="GeneID" id="945568"/>
<dbReference type="KEGG" id="ecj:JW0937"/>
<dbReference type="KEGG" id="eco:b0954"/>
<dbReference type="KEGG" id="ecoc:C3026_05835"/>
<dbReference type="PATRIC" id="fig|511145.12.peg.988"/>
<dbReference type="EchoBASE" id="EB0269"/>
<dbReference type="eggNOG" id="COG0764">
    <property type="taxonomic scope" value="Bacteria"/>
</dbReference>
<dbReference type="HOGENOM" id="CLU_097925_0_0_6"/>
<dbReference type="InParanoid" id="P0A6Q3"/>
<dbReference type="OMA" id="FDCHFKG"/>
<dbReference type="OrthoDB" id="9786735at2"/>
<dbReference type="PhylomeDB" id="P0A6Q3"/>
<dbReference type="BioCyc" id="EcoCyc:FABA-MONOMER"/>
<dbReference type="BioCyc" id="MetaCyc:FABA-MONOMER"/>
<dbReference type="BRENDA" id="4.2.1.59">
    <property type="organism ID" value="2026"/>
</dbReference>
<dbReference type="BRENDA" id="5.3.3.14">
    <property type="organism ID" value="2026"/>
</dbReference>
<dbReference type="UniPathway" id="UPA00094"/>
<dbReference type="EvolutionaryTrace" id="P0A6Q3"/>
<dbReference type="PRO" id="PR:P0A6Q3"/>
<dbReference type="Proteomes" id="UP000000625">
    <property type="component" value="Chromosome"/>
</dbReference>
<dbReference type="GO" id="GO:0005829">
    <property type="term" value="C:cytosol"/>
    <property type="evidence" value="ECO:0000314"/>
    <property type="project" value="EcoCyc"/>
</dbReference>
<dbReference type="GO" id="GO:0019171">
    <property type="term" value="F:(3R)-hydroxyacyl-[acyl-carrier-protein] dehydratase activity"/>
    <property type="evidence" value="ECO:0000314"/>
    <property type="project" value="EcoCyc"/>
</dbReference>
<dbReference type="GO" id="GO:0042803">
    <property type="term" value="F:protein homodimerization activity"/>
    <property type="evidence" value="ECO:0000314"/>
    <property type="project" value="EcoCyc"/>
</dbReference>
<dbReference type="GO" id="GO:0034017">
    <property type="term" value="F:trans-2-decenoyl-acyl-carrier-protein isomerase activity"/>
    <property type="evidence" value="ECO:0000314"/>
    <property type="project" value="EcoCyc"/>
</dbReference>
<dbReference type="GO" id="GO:0006633">
    <property type="term" value="P:fatty acid biosynthetic process"/>
    <property type="evidence" value="ECO:0000315"/>
    <property type="project" value="EcoCyc"/>
</dbReference>
<dbReference type="GO" id="GO:0006636">
    <property type="term" value="P:unsaturated fatty acid biosynthetic process"/>
    <property type="evidence" value="ECO:0007669"/>
    <property type="project" value="UniProtKB-UniRule"/>
</dbReference>
<dbReference type="CDD" id="cd01287">
    <property type="entry name" value="FabA"/>
    <property type="match status" value="1"/>
</dbReference>
<dbReference type="FunFam" id="3.10.129.10:FF:000003">
    <property type="entry name" value="3-hydroxydecanoyl-[acyl-carrier-protein] dehydratase"/>
    <property type="match status" value="1"/>
</dbReference>
<dbReference type="Gene3D" id="3.10.129.10">
    <property type="entry name" value="Hotdog Thioesterase"/>
    <property type="match status" value="1"/>
</dbReference>
<dbReference type="HAMAP" id="MF_00405">
    <property type="entry name" value="FabA"/>
    <property type="match status" value="1"/>
</dbReference>
<dbReference type="InterPro" id="IPR010083">
    <property type="entry name" value="FabA"/>
</dbReference>
<dbReference type="InterPro" id="IPR013114">
    <property type="entry name" value="FabA_FabZ"/>
</dbReference>
<dbReference type="InterPro" id="IPR029069">
    <property type="entry name" value="HotDog_dom_sf"/>
</dbReference>
<dbReference type="NCBIfam" id="TIGR01749">
    <property type="entry name" value="fabA"/>
    <property type="match status" value="1"/>
</dbReference>
<dbReference type="NCBIfam" id="NF003509">
    <property type="entry name" value="PRK05174.1"/>
    <property type="match status" value="1"/>
</dbReference>
<dbReference type="PANTHER" id="PTHR30272">
    <property type="entry name" value="3-HYDROXYACYL-[ACYL-CARRIER-PROTEIN] DEHYDRATASE"/>
    <property type="match status" value="1"/>
</dbReference>
<dbReference type="PANTHER" id="PTHR30272:SF8">
    <property type="entry name" value="3-HYDROXYDECANOYL-[ACYL-CARRIER-PROTEIN] DEHYDRATASE"/>
    <property type="match status" value="1"/>
</dbReference>
<dbReference type="Pfam" id="PF07977">
    <property type="entry name" value="FabA"/>
    <property type="match status" value="1"/>
</dbReference>
<dbReference type="SUPFAM" id="SSF54637">
    <property type="entry name" value="Thioesterase/thiol ester dehydrase-isomerase"/>
    <property type="match status" value="1"/>
</dbReference>
<protein>
    <recommendedName>
        <fullName>3-hydroxydecanoyl-[acyl-carrier-protein] dehydratase</fullName>
        <ecNumber evidence="1 4 5">4.2.1.59</ecNumber>
    </recommendedName>
    <alternativeName>
        <fullName>3-hydroxyacyl-[acyl-carrier-protein] dehydratase FabA</fullName>
    </alternativeName>
    <alternativeName>
        <fullName>Beta-hydroxydecanoyl thioester dehydrase</fullName>
    </alternativeName>
    <alternativeName>
        <fullName>Trans-2-decenoyl-[acyl-carrier-protein] isomerase</fullName>
        <ecNumber evidence="5">5.3.3.14</ecNumber>
    </alternativeName>
</protein>
<feature type="initiator methionine" description="Removed">
    <location>
        <position position="1"/>
    </location>
</feature>
<feature type="chain" id="PRO_0000091594" description="3-hydroxydecanoyl-[acyl-carrier-protein] dehydratase">
    <location>
        <begin position="2"/>
        <end position="172"/>
    </location>
</feature>
<feature type="active site" evidence="7">
    <location>
        <position position="71"/>
    </location>
</feature>
<feature type="sequence variant" description="In allele FABA6; TS.">
    <original>P</original>
    <variation>L</variation>
    <location>
        <position position="76"/>
    </location>
</feature>
<feature type="sequence variant" description="In allele FABA2; TS.">
    <original>G</original>
    <variation>D</variation>
    <location>
        <position position="102"/>
    </location>
</feature>
<feature type="helix" evidence="10">
    <location>
        <begin position="10"/>
        <end position="17"/>
    </location>
</feature>
<feature type="strand" evidence="8">
    <location>
        <begin position="24"/>
        <end position="26"/>
    </location>
</feature>
<feature type="turn" evidence="10">
    <location>
        <begin position="32"/>
        <end position="34"/>
    </location>
</feature>
<feature type="strand" evidence="10">
    <location>
        <begin position="38"/>
        <end position="46"/>
    </location>
</feature>
<feature type="turn" evidence="8">
    <location>
        <begin position="48"/>
        <end position="51"/>
    </location>
</feature>
<feature type="strand" evidence="10">
    <location>
        <begin position="54"/>
        <end position="60"/>
    </location>
</feature>
<feature type="helix" evidence="10">
    <location>
        <begin position="66"/>
        <end position="70"/>
    </location>
</feature>
<feature type="turn" evidence="10">
    <location>
        <begin position="71"/>
        <end position="74"/>
    </location>
</feature>
<feature type="helix" evidence="10">
    <location>
        <begin position="80"/>
        <end position="97"/>
    </location>
</feature>
<feature type="strand" evidence="10">
    <location>
        <begin position="102"/>
        <end position="110"/>
    </location>
</feature>
<feature type="strand" evidence="10">
    <location>
        <begin position="112"/>
        <end position="114"/>
    </location>
</feature>
<feature type="strand" evidence="10">
    <location>
        <begin position="124"/>
        <end position="150"/>
    </location>
</feature>
<feature type="strand" evidence="10">
    <location>
        <begin position="153"/>
        <end position="166"/>
    </location>
</feature>
<feature type="helix" evidence="9">
    <location>
        <begin position="169"/>
        <end position="171"/>
    </location>
</feature>
<evidence type="ECO:0000269" key="1">
    <source>
    </source>
</evidence>
<evidence type="ECO:0000269" key="2">
    <source>
    </source>
</evidence>
<evidence type="ECO:0000269" key="3">
    <source>
    </source>
</evidence>
<evidence type="ECO:0000269" key="4">
    <source>
    </source>
</evidence>
<evidence type="ECO:0000269" key="5">
    <source>
    </source>
</evidence>
<evidence type="ECO:0000305" key="6"/>
<evidence type="ECO:0000305" key="7">
    <source>
    </source>
</evidence>
<evidence type="ECO:0007829" key="8">
    <source>
        <dbReference type="PDB" id="1MKA"/>
    </source>
</evidence>
<evidence type="ECO:0007829" key="9">
    <source>
        <dbReference type="PDB" id="1MKB"/>
    </source>
</evidence>
<evidence type="ECO:0007829" key="10">
    <source>
        <dbReference type="PDB" id="4KEH"/>
    </source>
</evidence>
<organism>
    <name type="scientific">Escherichia coli (strain K12)</name>
    <dbReference type="NCBI Taxonomy" id="83333"/>
    <lineage>
        <taxon>Bacteria</taxon>
        <taxon>Pseudomonadati</taxon>
        <taxon>Pseudomonadota</taxon>
        <taxon>Gammaproteobacteria</taxon>
        <taxon>Enterobacterales</taxon>
        <taxon>Enterobacteriaceae</taxon>
        <taxon>Escherichia</taxon>
    </lineage>
</organism>